<proteinExistence type="inferred from homology"/>
<evidence type="ECO:0000255" key="1">
    <source>
        <dbReference type="HAMAP-Rule" id="MF_00393"/>
    </source>
</evidence>
<gene>
    <name evidence="1" type="primary">plsB</name>
    <name type="ordered locus">ECUMN_4575</name>
</gene>
<keyword id="KW-0012">Acyltransferase</keyword>
<keyword id="KW-0997">Cell inner membrane</keyword>
<keyword id="KW-1003">Cell membrane</keyword>
<keyword id="KW-0444">Lipid biosynthesis</keyword>
<keyword id="KW-0443">Lipid metabolism</keyword>
<keyword id="KW-0472">Membrane</keyword>
<keyword id="KW-0594">Phospholipid biosynthesis</keyword>
<keyword id="KW-1208">Phospholipid metabolism</keyword>
<keyword id="KW-0808">Transferase</keyword>
<comment type="catalytic activity">
    <reaction evidence="1">
        <text>sn-glycerol 3-phosphate + an acyl-CoA = a 1-acyl-sn-glycero-3-phosphate + CoA</text>
        <dbReference type="Rhea" id="RHEA:15325"/>
        <dbReference type="ChEBI" id="CHEBI:57287"/>
        <dbReference type="ChEBI" id="CHEBI:57597"/>
        <dbReference type="ChEBI" id="CHEBI:57970"/>
        <dbReference type="ChEBI" id="CHEBI:58342"/>
        <dbReference type="EC" id="2.3.1.15"/>
    </reaction>
</comment>
<comment type="pathway">
    <text evidence="1">Phospholipid metabolism; CDP-diacylglycerol biosynthesis; CDP-diacylglycerol from sn-glycerol 3-phosphate: step 1/3.</text>
</comment>
<comment type="subcellular location">
    <subcellularLocation>
        <location evidence="1">Cell inner membrane</location>
        <topology evidence="1">Peripheral membrane protein</topology>
        <orientation evidence="1">Cytoplasmic side</orientation>
    </subcellularLocation>
</comment>
<comment type="domain">
    <text evidence="1">The HXXXXD motif is essential for acyltransferase activity and may constitute the binding site for the phosphate moiety of the glycerol-3-phosphate.</text>
</comment>
<comment type="similarity">
    <text evidence="1">Belongs to the GPAT/DAPAT family.</text>
</comment>
<accession>B7NFY5</accession>
<organism>
    <name type="scientific">Escherichia coli O17:K52:H18 (strain UMN026 / ExPEC)</name>
    <dbReference type="NCBI Taxonomy" id="585056"/>
    <lineage>
        <taxon>Bacteria</taxon>
        <taxon>Pseudomonadati</taxon>
        <taxon>Pseudomonadota</taxon>
        <taxon>Gammaproteobacteria</taxon>
        <taxon>Enterobacterales</taxon>
        <taxon>Enterobacteriaceae</taxon>
        <taxon>Escherichia</taxon>
    </lineage>
</organism>
<dbReference type="EC" id="2.3.1.15" evidence="1"/>
<dbReference type="EMBL" id="CU928163">
    <property type="protein sequence ID" value="CAR15692.1"/>
    <property type="molecule type" value="Genomic_DNA"/>
</dbReference>
<dbReference type="RefSeq" id="WP_000017354.1">
    <property type="nucleotide sequence ID" value="NC_011751.1"/>
</dbReference>
<dbReference type="RefSeq" id="YP_002415182.1">
    <property type="nucleotide sequence ID" value="NC_011751.1"/>
</dbReference>
<dbReference type="SMR" id="B7NFY5"/>
<dbReference type="STRING" id="585056.ECUMN_4575"/>
<dbReference type="GeneID" id="75204185"/>
<dbReference type="KEGG" id="eum:ECUMN_4575"/>
<dbReference type="PATRIC" id="fig|585056.7.peg.4738"/>
<dbReference type="HOGENOM" id="CLU_015407_0_0_6"/>
<dbReference type="UniPathway" id="UPA00557">
    <property type="reaction ID" value="UER00612"/>
</dbReference>
<dbReference type="Proteomes" id="UP000007097">
    <property type="component" value="Chromosome"/>
</dbReference>
<dbReference type="GO" id="GO:0005886">
    <property type="term" value="C:plasma membrane"/>
    <property type="evidence" value="ECO:0007669"/>
    <property type="project" value="UniProtKB-SubCell"/>
</dbReference>
<dbReference type="GO" id="GO:0004366">
    <property type="term" value="F:glycerol-3-phosphate O-acyltransferase activity"/>
    <property type="evidence" value="ECO:0007669"/>
    <property type="project" value="UniProtKB-UniRule"/>
</dbReference>
<dbReference type="GO" id="GO:0016024">
    <property type="term" value="P:CDP-diacylglycerol biosynthetic process"/>
    <property type="evidence" value="ECO:0007669"/>
    <property type="project" value="UniProtKB-UniRule"/>
</dbReference>
<dbReference type="GO" id="GO:0006631">
    <property type="term" value="P:fatty acid metabolic process"/>
    <property type="evidence" value="ECO:0007669"/>
    <property type="project" value="TreeGrafter"/>
</dbReference>
<dbReference type="CDD" id="cd07993">
    <property type="entry name" value="LPLAT_DHAPAT-like"/>
    <property type="match status" value="1"/>
</dbReference>
<dbReference type="HAMAP" id="MF_00393">
    <property type="entry name" value="Glyc3P_acyltrans"/>
    <property type="match status" value="1"/>
</dbReference>
<dbReference type="InterPro" id="IPR022284">
    <property type="entry name" value="GPAT/DHAPAT"/>
</dbReference>
<dbReference type="InterPro" id="IPR045520">
    <property type="entry name" value="GPAT/DHAPAT_C"/>
</dbReference>
<dbReference type="InterPro" id="IPR041728">
    <property type="entry name" value="GPAT/DHAPAT_LPLAT"/>
</dbReference>
<dbReference type="InterPro" id="IPR028354">
    <property type="entry name" value="GPAT_PlsB"/>
</dbReference>
<dbReference type="InterPro" id="IPR002123">
    <property type="entry name" value="Plipid/glycerol_acylTrfase"/>
</dbReference>
<dbReference type="NCBIfam" id="TIGR03703">
    <property type="entry name" value="plsB"/>
    <property type="match status" value="1"/>
</dbReference>
<dbReference type="NCBIfam" id="NF003441">
    <property type="entry name" value="PRK04974.1"/>
    <property type="match status" value="1"/>
</dbReference>
<dbReference type="PANTHER" id="PTHR12563:SF17">
    <property type="entry name" value="DIHYDROXYACETONE PHOSPHATE ACYLTRANSFERASE"/>
    <property type="match status" value="1"/>
</dbReference>
<dbReference type="PANTHER" id="PTHR12563">
    <property type="entry name" value="GLYCEROL-3-PHOSPHATE ACYLTRANSFERASE"/>
    <property type="match status" value="1"/>
</dbReference>
<dbReference type="Pfam" id="PF01553">
    <property type="entry name" value="Acyltransferase"/>
    <property type="match status" value="1"/>
</dbReference>
<dbReference type="Pfam" id="PF19277">
    <property type="entry name" value="GPAT_C"/>
    <property type="match status" value="1"/>
</dbReference>
<dbReference type="PIRSF" id="PIRSF500064">
    <property type="entry name" value="GPAT"/>
    <property type="match status" value="1"/>
</dbReference>
<dbReference type="PIRSF" id="PIRSF000437">
    <property type="entry name" value="GPAT_DHAPAT"/>
    <property type="match status" value="1"/>
</dbReference>
<dbReference type="SMART" id="SM00563">
    <property type="entry name" value="PlsC"/>
    <property type="match status" value="1"/>
</dbReference>
<dbReference type="SUPFAM" id="SSF69593">
    <property type="entry name" value="Glycerol-3-phosphate (1)-acyltransferase"/>
    <property type="match status" value="1"/>
</dbReference>
<reference key="1">
    <citation type="journal article" date="2009" name="PLoS Genet.">
        <title>Organised genome dynamics in the Escherichia coli species results in highly diverse adaptive paths.</title>
        <authorList>
            <person name="Touchon M."/>
            <person name="Hoede C."/>
            <person name="Tenaillon O."/>
            <person name="Barbe V."/>
            <person name="Baeriswyl S."/>
            <person name="Bidet P."/>
            <person name="Bingen E."/>
            <person name="Bonacorsi S."/>
            <person name="Bouchier C."/>
            <person name="Bouvet O."/>
            <person name="Calteau A."/>
            <person name="Chiapello H."/>
            <person name="Clermont O."/>
            <person name="Cruveiller S."/>
            <person name="Danchin A."/>
            <person name="Diard M."/>
            <person name="Dossat C."/>
            <person name="Karoui M.E."/>
            <person name="Frapy E."/>
            <person name="Garry L."/>
            <person name="Ghigo J.M."/>
            <person name="Gilles A.M."/>
            <person name="Johnson J."/>
            <person name="Le Bouguenec C."/>
            <person name="Lescat M."/>
            <person name="Mangenot S."/>
            <person name="Martinez-Jehanne V."/>
            <person name="Matic I."/>
            <person name="Nassif X."/>
            <person name="Oztas S."/>
            <person name="Petit M.A."/>
            <person name="Pichon C."/>
            <person name="Rouy Z."/>
            <person name="Ruf C.S."/>
            <person name="Schneider D."/>
            <person name="Tourret J."/>
            <person name="Vacherie B."/>
            <person name="Vallenet D."/>
            <person name="Medigue C."/>
            <person name="Rocha E.P.C."/>
            <person name="Denamur E."/>
        </authorList>
    </citation>
    <scope>NUCLEOTIDE SEQUENCE [LARGE SCALE GENOMIC DNA]</scope>
    <source>
        <strain>UMN026 / ExPEC</strain>
    </source>
</reference>
<sequence length="807" mass="91381">MSGWPRIYYKLLNLPLSILVKSKSIPADPAPELGLDTSRPIMYVLPYNSKADLLTLRAQCLAHDLPDPLEPLEIDGTLLPRYVFIHGGPRVFTYYTPKEESIKLFHDYLDLHRSNPNLDVQMVPVSVMFGRAPGREKGEVNPPLRMLNGVQKFFAVLWLGRDSFVRFSPSVSLRRMADEHGTDKTIAQKLARVARMHFARQRLAAVGPRLPARQDLFNKLLASRAIAKAVEDEARSKKISHEKAQQNAIALMEEIAANFSYEMIRLTDRILGFTWNRLYQGINVHNAERVRQLAHDGHELVYVPCHRSHMDYLLLSYVLYHQGLVPPHIAAGINLNFWPAGPIFRRLGAFFIRRTFKGNKLYSTVFREYLGELFSRGYSVEYFVEGGRSRTGRLLDPKTGTLSMTIQAMLRGGTRPITLIPIYIGYEHVMEVGTYAKELRGATKEKESLPQMLRGLSKLRNLGQGYVNFGEPMPLMTYLNQHVPDWRESIDPIEAVRPAWLTPTVNNIAADLMVRINNAGAANAMNLCCTALLASRQRSLTREQLTEQLNCYLDLMRNVPYSTDSTVPSASASELIDHALQMNKFEVEKDTIGDIIILPREQAVLMTYYRNNIAHMLVLPSLMAAIVTQHRHISRDVLMEHVNVLYPMLKAELFLRWDRDELPDVIDALANEMQRQGLITLQDDELHINPAHSRTLQLLAAGARETLQRYAITFWLLSANPSINRGTLEKESRTVAQRLSVLHGINAPEFFDKAVFSSLVLTLRDEGYISDSGDAEPAETMKVYQLLAELITSDVRLTIESATQGEG</sequence>
<feature type="chain" id="PRO_1000123080" description="Glycerol-3-phosphate acyltransferase">
    <location>
        <begin position="1"/>
        <end position="807"/>
    </location>
</feature>
<feature type="short sequence motif" description="HXXXXD motif">
    <location>
        <begin position="305"/>
        <end position="310"/>
    </location>
</feature>
<protein>
    <recommendedName>
        <fullName evidence="1">Glycerol-3-phosphate acyltransferase</fullName>
        <shortName evidence="1">GPAT</shortName>
        <ecNumber evidence="1">2.3.1.15</ecNumber>
    </recommendedName>
</protein>
<name>PLSB_ECOLU</name>